<reference key="1">
    <citation type="journal article" date="2007" name="Nat. Biotechnol.">
        <title>Genome sequencing and analysis of the versatile cell factory Aspergillus niger CBS 513.88.</title>
        <authorList>
            <person name="Pel H.J."/>
            <person name="de Winde J.H."/>
            <person name="Archer D.B."/>
            <person name="Dyer P.S."/>
            <person name="Hofmann G."/>
            <person name="Schaap P.J."/>
            <person name="Turner G."/>
            <person name="de Vries R.P."/>
            <person name="Albang R."/>
            <person name="Albermann K."/>
            <person name="Andersen M.R."/>
            <person name="Bendtsen J.D."/>
            <person name="Benen J.A.E."/>
            <person name="van den Berg M."/>
            <person name="Breestraat S."/>
            <person name="Caddick M.X."/>
            <person name="Contreras R."/>
            <person name="Cornell M."/>
            <person name="Coutinho P.M."/>
            <person name="Danchin E.G.J."/>
            <person name="Debets A.J.M."/>
            <person name="Dekker P."/>
            <person name="van Dijck P.W.M."/>
            <person name="van Dijk A."/>
            <person name="Dijkhuizen L."/>
            <person name="Driessen A.J.M."/>
            <person name="d'Enfert C."/>
            <person name="Geysens S."/>
            <person name="Goosen C."/>
            <person name="Groot G.S.P."/>
            <person name="de Groot P.W.J."/>
            <person name="Guillemette T."/>
            <person name="Henrissat B."/>
            <person name="Herweijer M."/>
            <person name="van den Hombergh J.P.T.W."/>
            <person name="van den Hondel C.A.M.J.J."/>
            <person name="van der Heijden R.T.J.M."/>
            <person name="van der Kaaij R.M."/>
            <person name="Klis F.M."/>
            <person name="Kools H.J."/>
            <person name="Kubicek C.P."/>
            <person name="van Kuyk P.A."/>
            <person name="Lauber J."/>
            <person name="Lu X."/>
            <person name="van der Maarel M.J.E.C."/>
            <person name="Meulenberg R."/>
            <person name="Menke H."/>
            <person name="Mortimer M.A."/>
            <person name="Nielsen J."/>
            <person name="Oliver S.G."/>
            <person name="Olsthoorn M."/>
            <person name="Pal K."/>
            <person name="van Peij N.N.M.E."/>
            <person name="Ram A.F.J."/>
            <person name="Rinas U."/>
            <person name="Roubos J.A."/>
            <person name="Sagt C.M.J."/>
            <person name="Schmoll M."/>
            <person name="Sun J."/>
            <person name="Ussery D."/>
            <person name="Varga J."/>
            <person name="Vervecken W."/>
            <person name="van de Vondervoort P.J.J."/>
            <person name="Wedler H."/>
            <person name="Woesten H.A.B."/>
            <person name="Zeng A.-P."/>
            <person name="van Ooyen A.J.J."/>
            <person name="Visser J."/>
            <person name="Stam H."/>
        </authorList>
    </citation>
    <scope>NUCLEOTIDE SEQUENCE [LARGE SCALE GENOMIC DNA]</scope>
    <source>
        <strain>ATCC MYA-4892 / CBS 513.88 / FGSC A1513</strain>
    </source>
</reference>
<reference key="2">
    <citation type="journal article" date="2013" name="ChemBioChem">
        <title>Pyranonigrin E: a PKS-NRPS hybrid metabolite from Aspergillus niger identified by genome mining.</title>
        <authorList>
            <person name="Awakawa T."/>
            <person name="Yang X.L."/>
            <person name="Wakimoto T."/>
            <person name="Abe I."/>
        </authorList>
    </citation>
    <scope>FUNCTION</scope>
</reference>
<reference key="3">
    <citation type="journal article" date="2015" name="Org. Lett.">
        <title>Elucidation of pyranonigrin biosynthetic pathway reveals a mode of tetramic acid, fused gamma-pyrone, and exo-methylene formation.</title>
        <authorList>
            <person name="Yamamoto T."/>
            <person name="Tsunematsu Y."/>
            <person name="Noguchi H."/>
            <person name="Hotta K."/>
            <person name="Watanabe K."/>
        </authorList>
    </citation>
    <scope>FUNCTION</scope>
    <scope>DISRUPTION PHENOTYPE</scope>
    <scope>CATALYTIC ACTIVITY</scope>
    <scope>PATHWAY</scope>
</reference>
<feature type="signal peptide" evidence="1">
    <location>
        <begin position="1"/>
        <end position="19"/>
    </location>
</feature>
<feature type="chain" id="PRO_5002679118" description="Aspartic protease-like protein pynH">
    <location>
        <begin position="20"/>
        <end position="414"/>
    </location>
</feature>
<feature type="domain" description="Peptidase A1" evidence="3">
    <location>
        <begin position="43"/>
        <end position="410"/>
    </location>
</feature>
<feature type="glycosylation site" description="N-linked (GlcNAc...) asparagine" evidence="2">
    <location>
        <position position="93"/>
    </location>
</feature>
<feature type="glycosylation site" description="N-linked (GlcNAc...) asparagine" evidence="2">
    <location>
        <position position="102"/>
    </location>
</feature>
<feature type="glycosylation site" description="N-linked (GlcNAc...) asparagine" evidence="2">
    <location>
        <position position="140"/>
    </location>
</feature>
<feature type="glycosylation site" description="N-linked (GlcNAc...) asparagine" evidence="2">
    <location>
        <position position="151"/>
    </location>
</feature>
<feature type="glycosylation site" description="N-linked (GlcNAc...) asparagine" evidence="2">
    <location>
        <position position="173"/>
    </location>
</feature>
<feature type="glycosylation site" description="N-linked (GlcNAc...) asparagine" evidence="2">
    <location>
        <position position="202"/>
    </location>
</feature>
<feature type="glycosylation site" description="N-linked (GlcNAc...) asparagine" evidence="2">
    <location>
        <position position="221"/>
    </location>
</feature>
<feature type="glycosylation site" description="N-linked (GlcNAc...) asparagine" evidence="2">
    <location>
        <position position="258"/>
    </location>
</feature>
<feature type="glycosylation site" description="N-linked (GlcNAc...) asparagine" evidence="2">
    <location>
        <position position="272"/>
    </location>
</feature>
<feature type="glycosylation site" description="N-linked (GlcNAc...) asparagine" evidence="2">
    <location>
        <position position="335"/>
    </location>
</feature>
<feature type="glycosylation site" description="N-linked (GlcNAc...) asparagine" evidence="2">
    <location>
        <position position="366"/>
    </location>
</feature>
<feature type="disulfide bond" evidence="3">
    <location>
        <begin position="333"/>
        <end position="371"/>
    </location>
</feature>
<dbReference type="EC" id="3.4.23.-" evidence="5"/>
<dbReference type="EMBL" id="AM270218">
    <property type="protein sequence ID" value="CAK48264.1"/>
    <property type="molecule type" value="Genomic_DNA"/>
</dbReference>
<dbReference type="RefSeq" id="XP_001394035.1">
    <property type="nucleotide sequence ID" value="XM_001393998.1"/>
</dbReference>
<dbReference type="SMR" id="A5ABG6"/>
<dbReference type="GlyCosmos" id="A5ABG6">
    <property type="glycosylation" value="11 sites, No reported glycans"/>
</dbReference>
<dbReference type="EnsemblFungi" id="CAK48264">
    <property type="protein sequence ID" value="CAK48264"/>
    <property type="gene ID" value="An11g00310"/>
</dbReference>
<dbReference type="GeneID" id="4984236"/>
<dbReference type="KEGG" id="ang:An11g00310"/>
<dbReference type="VEuPathDB" id="FungiDB:An11g00310"/>
<dbReference type="HOGENOM" id="CLU_039077_0_0_1"/>
<dbReference type="Proteomes" id="UP000006706">
    <property type="component" value="Chromosome 7R"/>
</dbReference>
<dbReference type="GO" id="GO:0004190">
    <property type="term" value="F:aspartic-type endopeptidase activity"/>
    <property type="evidence" value="ECO:0007669"/>
    <property type="project" value="InterPro"/>
</dbReference>
<dbReference type="GO" id="GO:0006508">
    <property type="term" value="P:proteolysis"/>
    <property type="evidence" value="ECO:0007669"/>
    <property type="project" value="InterPro"/>
</dbReference>
<dbReference type="GO" id="GO:0019748">
    <property type="term" value="P:secondary metabolic process"/>
    <property type="evidence" value="ECO:0000317"/>
    <property type="project" value="AspGD"/>
</dbReference>
<dbReference type="CDD" id="cd05471">
    <property type="entry name" value="pepsin_like"/>
    <property type="match status" value="1"/>
</dbReference>
<dbReference type="FunFam" id="2.40.70.10:FF:000144">
    <property type="entry name" value="Aspartic protease"/>
    <property type="match status" value="1"/>
</dbReference>
<dbReference type="FunFam" id="2.40.70.10:FF:000145">
    <property type="entry name" value="Aspartic protease"/>
    <property type="match status" value="1"/>
</dbReference>
<dbReference type="Gene3D" id="2.40.70.10">
    <property type="entry name" value="Acid Proteases"/>
    <property type="match status" value="2"/>
</dbReference>
<dbReference type="InterPro" id="IPR001461">
    <property type="entry name" value="Aspartic_peptidase_A1"/>
</dbReference>
<dbReference type="InterPro" id="IPR034164">
    <property type="entry name" value="Pepsin-like_dom"/>
</dbReference>
<dbReference type="InterPro" id="IPR033121">
    <property type="entry name" value="PEPTIDASE_A1"/>
</dbReference>
<dbReference type="InterPro" id="IPR021109">
    <property type="entry name" value="Peptidase_aspartic_dom_sf"/>
</dbReference>
<dbReference type="PANTHER" id="PTHR47966">
    <property type="entry name" value="BETA-SITE APP-CLEAVING ENZYME, ISOFORM A-RELATED"/>
    <property type="match status" value="1"/>
</dbReference>
<dbReference type="PANTHER" id="PTHR47966:SF51">
    <property type="entry name" value="BETA-SITE APP-CLEAVING ENZYME, ISOFORM A-RELATED"/>
    <property type="match status" value="1"/>
</dbReference>
<dbReference type="Pfam" id="PF00026">
    <property type="entry name" value="Asp"/>
    <property type="match status" value="1"/>
</dbReference>
<dbReference type="SUPFAM" id="SSF50630">
    <property type="entry name" value="Acid proteases"/>
    <property type="match status" value="1"/>
</dbReference>
<dbReference type="PROSITE" id="PS51767">
    <property type="entry name" value="PEPTIDASE_A1"/>
    <property type="match status" value="1"/>
</dbReference>
<name>PYNH_ASPNC</name>
<proteinExistence type="evidence at protein level"/>
<sequence length="414" mass="45782">MFPCSRIWSLLVAAATASAVPTSLATTHLQSVDLLLTRSSYGFLTDIALGTPGQSLPYLVDWTWTGHYVVTTLCYNDPTATYDCLNVDQKIFNQTLSSTFINQTDQYGYLYWDPNHFYFTEPAAADVATDMLRIGPTAVNTTIQAANFVFNETISAFPFSGVYGLSPVFQGDNRSVQASFYQGWRSGAWHSPIVSFIYCHDNATKAVCSGYDGLQTLGGYNTSHVQGDITWYDIIVTEAINTLDFVYAPAVINYWALNLTRFSIGDEEQELNKTTTLDGKQAAVAAFDHASYGRGAPVSVYGYQRLVELVGAKAVTLSDPPNNGEQGFYQFDCRNSSLLPPLRYEFAGSERAWEIVPENYVEVLANGTNKCTFNVRTLGDGAMVMGNFGETFAIDKYVMFDFEKLQVGIADFAW</sequence>
<organism>
    <name type="scientific">Aspergillus niger (strain ATCC MYA-4892 / CBS 513.88 / FGSC A1513)</name>
    <dbReference type="NCBI Taxonomy" id="425011"/>
    <lineage>
        <taxon>Eukaryota</taxon>
        <taxon>Fungi</taxon>
        <taxon>Dikarya</taxon>
        <taxon>Ascomycota</taxon>
        <taxon>Pezizomycotina</taxon>
        <taxon>Eurotiomycetes</taxon>
        <taxon>Eurotiomycetidae</taxon>
        <taxon>Eurotiales</taxon>
        <taxon>Aspergillaceae</taxon>
        <taxon>Aspergillus</taxon>
        <taxon>Aspergillus subgen. Circumdati</taxon>
    </lineage>
</organism>
<evidence type="ECO:0000255" key="1"/>
<evidence type="ECO:0000255" key="2">
    <source>
        <dbReference type="PROSITE-ProRule" id="PRU00498"/>
    </source>
</evidence>
<evidence type="ECO:0000255" key="3">
    <source>
        <dbReference type="PROSITE-ProRule" id="PRU01103"/>
    </source>
</evidence>
<evidence type="ECO:0000269" key="4">
    <source>
    </source>
</evidence>
<evidence type="ECO:0000269" key="5">
    <source>
    </source>
</evidence>
<evidence type="ECO:0000303" key="6">
    <source>
    </source>
</evidence>
<evidence type="ECO:0000305" key="7"/>
<evidence type="ECO:0000305" key="8">
    <source>
    </source>
</evidence>
<gene>
    <name evidence="6" type="primary">pynH</name>
    <name type="ORF">An11g00310</name>
</gene>
<protein>
    <recommendedName>
        <fullName evidence="6">Aspartic protease-like protein pynH</fullName>
        <ecNumber evidence="5">3.4.23.-</ecNumber>
    </recommendedName>
    <alternativeName>
        <fullName evidence="6">Pyranonigrin biosynthesis cluster protein H</fullName>
    </alternativeName>
</protein>
<comment type="function">
    <text evidence="4 5 8">Aspartic protease-like protein; part of the gene cluster that mediates the biosynthesis of pyranonigrins, a family of antioxidative compounds (PubMed:24106156). The first step of pyranonigrins biosynthesis is performed by the hybrid PKS-NRPS synthetase that condenses 6 malonyl-CoA units to an acetyl starter unit, to form a 1,3,5-trioxotetradecane-6,8-dienyl-ACP (PubMed:24106156). The enoyl reductase (ER) domain of pynA is likely to be functional during the first two rounds of polyketide chain extension, to generate the saturated C-C bonds of the alkyl side chain (Probable). PynA subsequently forms the amide bond between the acyl chain and L-serine (PubMed:24106156, PubMed:26414728). Although pynA has a terminal reductase domain, it appears to require the thioesterase pynI for the release of the straight-chain intermediate from pynA via the formation of a tetramic acid pyranonigrin J (PubMed:26414728). The methyltransferase pynC then coverts pyranonigrin J to pyranonigrin I via N-methylation (PubMed:26414728). The FAD-dependent monooxygenase pynG catalyzes an epoxidation-mediated cyclization to form the dihydro-gamma-pyrone moiety, followed by pynD-catalyzed oxidation of the alcohol to the ketone and enolization to yield the characteristic tetramic acid-fused gamma-pyrone core of pyranonigrin H (PubMed:26414728). Pyranonigrin H is substrate of pynH for dehydration-mediated exo-methylene formation from the serine side chain to produce pyranonigrin E, before the oxidase pynE reduces the exo-methylene of pyranonigrin E into a pendant methyl to form pyranonigrin G (PubMed:26414728). The FAD-linked oxidoreductase pynB performs the reverse reaction and converts pyranonigrin G back to pyranonigrin E (PubMed:26414728).</text>
</comment>
<comment type="pathway">
    <text evidence="5">Secondary metabolite biosynthesis.</text>
</comment>
<comment type="disruption phenotype">
    <text evidence="5">Leads to the accumulation of pyranonigrin H.</text>
</comment>
<comment type="similarity">
    <text evidence="7">Belongs to the peptidase A1 family.</text>
</comment>
<accession>A5ABG6</accession>
<keyword id="KW-1015">Disulfide bond</keyword>
<keyword id="KW-0325">Glycoprotein</keyword>
<keyword id="KW-0378">Hydrolase</keyword>
<keyword id="KW-1185">Reference proteome</keyword>
<keyword id="KW-0732">Signal</keyword>